<reference key="1">
    <citation type="journal article" date="2014" name="Stand. Genomic Sci.">
        <title>Complete genome sequence of Anabaena variabilis ATCC 29413.</title>
        <authorList>
            <person name="Thiel T."/>
            <person name="Pratte B.S."/>
            <person name="Zhong J."/>
            <person name="Goodwin L."/>
            <person name="Copeland A."/>
            <person name="Lucas S."/>
            <person name="Han C."/>
            <person name="Pitluck S."/>
            <person name="Land M.L."/>
            <person name="Kyrpides N.C."/>
            <person name="Woyke T."/>
        </authorList>
    </citation>
    <scope>NUCLEOTIDE SEQUENCE [LARGE SCALE GENOMIC DNA]</scope>
    <source>
        <strain>ATCC 29413 / PCC 7937</strain>
    </source>
</reference>
<sequence>MTASTTINKGDSPNGDSSASSVLHQKVLGSRRFSNYWWASIVTLGASGFLLAGISSYLKVNLLIVTDPTQLIFVPQGLVMGLYGTAGLLLASYLWLAILWDLGGGYNDFNRETGNIKIFRWGFPGKNRKIEIGSRIQDIQSVRIDIKEGLNPRRALYLRVKGRRDIPLTRVGQPLSLAELETQGAQLARFLGVPLEGL</sequence>
<accession>Q3MDS1</accession>
<protein>
    <recommendedName>
        <fullName evidence="1">Photosystem I assembly protein Ycf4</fullName>
    </recommendedName>
</protein>
<gene>
    <name evidence="1" type="primary">ycf4</name>
    <name type="ordered locus">Ava_1241</name>
</gene>
<comment type="function">
    <text evidence="1">Seems to be required for the assembly of the photosystem I complex.</text>
</comment>
<comment type="subcellular location">
    <subcellularLocation>
        <location evidence="1">Cellular thylakoid membrane</location>
        <topology evidence="1">Multi-pass membrane protein</topology>
    </subcellularLocation>
</comment>
<comment type="similarity">
    <text evidence="1">Belongs to the Ycf4 family.</text>
</comment>
<organism>
    <name type="scientific">Trichormus variabilis (strain ATCC 29413 / PCC 7937)</name>
    <name type="common">Anabaena variabilis</name>
    <dbReference type="NCBI Taxonomy" id="240292"/>
    <lineage>
        <taxon>Bacteria</taxon>
        <taxon>Bacillati</taxon>
        <taxon>Cyanobacteriota</taxon>
        <taxon>Cyanophyceae</taxon>
        <taxon>Nostocales</taxon>
        <taxon>Nostocaceae</taxon>
        <taxon>Trichormus</taxon>
    </lineage>
</organism>
<name>YCF4_TRIV2</name>
<dbReference type="EMBL" id="CP000117">
    <property type="protein sequence ID" value="ABA20865.1"/>
    <property type="molecule type" value="Genomic_DNA"/>
</dbReference>
<dbReference type="SMR" id="Q3MDS1"/>
<dbReference type="STRING" id="240292.Ava_1241"/>
<dbReference type="KEGG" id="ava:Ava_1241"/>
<dbReference type="eggNOG" id="ENOG502Z7YX">
    <property type="taxonomic scope" value="Bacteria"/>
</dbReference>
<dbReference type="HOGENOM" id="CLU_095465_0_0_3"/>
<dbReference type="Proteomes" id="UP000002533">
    <property type="component" value="Chromosome"/>
</dbReference>
<dbReference type="GO" id="GO:0009522">
    <property type="term" value="C:photosystem I"/>
    <property type="evidence" value="ECO:0007669"/>
    <property type="project" value="InterPro"/>
</dbReference>
<dbReference type="GO" id="GO:0031676">
    <property type="term" value="C:plasma membrane-derived thylakoid membrane"/>
    <property type="evidence" value="ECO:0007669"/>
    <property type="project" value="UniProtKB-SubCell"/>
</dbReference>
<dbReference type="GO" id="GO:0015979">
    <property type="term" value="P:photosynthesis"/>
    <property type="evidence" value="ECO:0007669"/>
    <property type="project" value="UniProtKB-UniRule"/>
</dbReference>
<dbReference type="HAMAP" id="MF_00437">
    <property type="entry name" value="Ycf4"/>
    <property type="match status" value="1"/>
</dbReference>
<dbReference type="InterPro" id="IPR003359">
    <property type="entry name" value="PSI_Ycf4_assembly"/>
</dbReference>
<dbReference type="NCBIfam" id="NF002712">
    <property type="entry name" value="PRK02542.1"/>
    <property type="match status" value="1"/>
</dbReference>
<dbReference type="PANTHER" id="PTHR33288">
    <property type="match status" value="1"/>
</dbReference>
<dbReference type="PANTHER" id="PTHR33288:SF4">
    <property type="entry name" value="PHOTOSYSTEM I ASSEMBLY PROTEIN YCF4"/>
    <property type="match status" value="1"/>
</dbReference>
<dbReference type="Pfam" id="PF02392">
    <property type="entry name" value="Ycf4"/>
    <property type="match status" value="1"/>
</dbReference>
<proteinExistence type="inferred from homology"/>
<feature type="chain" id="PRO_1000025945" description="Photosystem I assembly protein Ycf4">
    <location>
        <begin position="1"/>
        <end position="198"/>
    </location>
</feature>
<feature type="transmembrane region" description="Helical" evidence="1">
    <location>
        <begin position="38"/>
        <end position="58"/>
    </location>
</feature>
<feature type="transmembrane region" description="Helical" evidence="1">
    <location>
        <begin position="78"/>
        <end position="98"/>
    </location>
</feature>
<feature type="region of interest" description="Disordered" evidence="2">
    <location>
        <begin position="1"/>
        <end position="20"/>
    </location>
</feature>
<keyword id="KW-0472">Membrane</keyword>
<keyword id="KW-0602">Photosynthesis</keyword>
<keyword id="KW-0793">Thylakoid</keyword>
<keyword id="KW-0812">Transmembrane</keyword>
<keyword id="KW-1133">Transmembrane helix</keyword>
<evidence type="ECO:0000255" key="1">
    <source>
        <dbReference type="HAMAP-Rule" id="MF_00437"/>
    </source>
</evidence>
<evidence type="ECO:0000256" key="2">
    <source>
        <dbReference type="SAM" id="MobiDB-lite"/>
    </source>
</evidence>